<dbReference type="EC" id="2.3.1.181" evidence="1"/>
<dbReference type="EMBL" id="CP000661">
    <property type="protein sequence ID" value="ABP69571.1"/>
    <property type="molecule type" value="Genomic_DNA"/>
</dbReference>
<dbReference type="SMR" id="A4WQA7"/>
<dbReference type="STRING" id="349102.Rsph17025_0665"/>
<dbReference type="KEGG" id="rsq:Rsph17025_0665"/>
<dbReference type="eggNOG" id="COG0321">
    <property type="taxonomic scope" value="Bacteria"/>
</dbReference>
<dbReference type="HOGENOM" id="CLU_035168_3_0_5"/>
<dbReference type="BioCyc" id="RSPH349102:G1G8M-686-MONOMER"/>
<dbReference type="UniPathway" id="UPA00538">
    <property type="reaction ID" value="UER00592"/>
</dbReference>
<dbReference type="GO" id="GO:0005737">
    <property type="term" value="C:cytoplasm"/>
    <property type="evidence" value="ECO:0007669"/>
    <property type="project" value="UniProtKB-SubCell"/>
</dbReference>
<dbReference type="GO" id="GO:0033819">
    <property type="term" value="F:lipoyl(octanoyl) transferase activity"/>
    <property type="evidence" value="ECO:0007669"/>
    <property type="project" value="UniProtKB-EC"/>
</dbReference>
<dbReference type="GO" id="GO:0036211">
    <property type="term" value="P:protein modification process"/>
    <property type="evidence" value="ECO:0007669"/>
    <property type="project" value="InterPro"/>
</dbReference>
<dbReference type="CDD" id="cd16444">
    <property type="entry name" value="LipB"/>
    <property type="match status" value="1"/>
</dbReference>
<dbReference type="Gene3D" id="3.30.930.10">
    <property type="entry name" value="Bira Bifunctional Protein, Domain 2"/>
    <property type="match status" value="1"/>
</dbReference>
<dbReference type="HAMAP" id="MF_00013">
    <property type="entry name" value="LipB"/>
    <property type="match status" value="1"/>
</dbReference>
<dbReference type="InterPro" id="IPR045864">
    <property type="entry name" value="aa-tRNA-synth_II/BPL/LPL"/>
</dbReference>
<dbReference type="InterPro" id="IPR004143">
    <property type="entry name" value="BPL_LPL_catalytic"/>
</dbReference>
<dbReference type="InterPro" id="IPR000544">
    <property type="entry name" value="Octanoyltransferase"/>
</dbReference>
<dbReference type="InterPro" id="IPR020605">
    <property type="entry name" value="Octanoyltransferase_CS"/>
</dbReference>
<dbReference type="NCBIfam" id="TIGR00214">
    <property type="entry name" value="lipB"/>
    <property type="match status" value="1"/>
</dbReference>
<dbReference type="NCBIfam" id="NF010921">
    <property type="entry name" value="PRK14341.1"/>
    <property type="match status" value="1"/>
</dbReference>
<dbReference type="NCBIfam" id="NF010925">
    <property type="entry name" value="PRK14345.1"/>
    <property type="match status" value="1"/>
</dbReference>
<dbReference type="PANTHER" id="PTHR10993:SF7">
    <property type="entry name" value="LIPOYLTRANSFERASE 2, MITOCHONDRIAL-RELATED"/>
    <property type="match status" value="1"/>
</dbReference>
<dbReference type="PANTHER" id="PTHR10993">
    <property type="entry name" value="OCTANOYLTRANSFERASE"/>
    <property type="match status" value="1"/>
</dbReference>
<dbReference type="Pfam" id="PF21948">
    <property type="entry name" value="LplA-B_cat"/>
    <property type="match status" value="1"/>
</dbReference>
<dbReference type="PIRSF" id="PIRSF016262">
    <property type="entry name" value="LPLase"/>
    <property type="match status" value="1"/>
</dbReference>
<dbReference type="SUPFAM" id="SSF55681">
    <property type="entry name" value="Class II aaRS and biotin synthetases"/>
    <property type="match status" value="1"/>
</dbReference>
<dbReference type="PROSITE" id="PS51733">
    <property type="entry name" value="BPL_LPL_CATALYTIC"/>
    <property type="match status" value="1"/>
</dbReference>
<dbReference type="PROSITE" id="PS01313">
    <property type="entry name" value="LIPB"/>
    <property type="match status" value="1"/>
</dbReference>
<sequence>MSDVEWSVLPGLSPYQETLSAMEARVAAIRAGDAPEAVWLLEHPPLYTAGTSARPEDLVEPDRFPVHVAGRGGQYTYHGPGQRVAYVMLDLDRRGRDVRRFVCALEDWVIATLAEFNVKGERRAGRVGVWVVRPDRAPGPDGQPREDKIAAIGVKLRRWVSFHGLSINLEPDLSHFEGIVPCGIREHGVTSLVDLGLPVTMQDLDAALLRTFSRSFPD</sequence>
<keyword id="KW-0012">Acyltransferase</keyword>
<keyword id="KW-0963">Cytoplasm</keyword>
<keyword id="KW-0808">Transferase</keyword>
<comment type="function">
    <text evidence="1">Catalyzes the transfer of endogenously produced octanoic acid from octanoyl-acyl-carrier-protein onto the lipoyl domains of lipoate-dependent enzymes. Lipoyl-ACP can also act as a substrate although octanoyl-ACP is likely to be the physiological substrate.</text>
</comment>
<comment type="catalytic activity">
    <reaction evidence="1">
        <text>octanoyl-[ACP] + L-lysyl-[protein] = N(6)-octanoyl-L-lysyl-[protein] + holo-[ACP] + H(+)</text>
        <dbReference type="Rhea" id="RHEA:17665"/>
        <dbReference type="Rhea" id="RHEA-COMP:9636"/>
        <dbReference type="Rhea" id="RHEA-COMP:9685"/>
        <dbReference type="Rhea" id="RHEA-COMP:9752"/>
        <dbReference type="Rhea" id="RHEA-COMP:9928"/>
        <dbReference type="ChEBI" id="CHEBI:15378"/>
        <dbReference type="ChEBI" id="CHEBI:29969"/>
        <dbReference type="ChEBI" id="CHEBI:64479"/>
        <dbReference type="ChEBI" id="CHEBI:78463"/>
        <dbReference type="ChEBI" id="CHEBI:78809"/>
        <dbReference type="EC" id="2.3.1.181"/>
    </reaction>
</comment>
<comment type="pathway">
    <text evidence="1">Protein modification; protein lipoylation via endogenous pathway; protein N(6)-(lipoyl)lysine from octanoyl-[acyl-carrier-protein]: step 1/2.</text>
</comment>
<comment type="subcellular location">
    <subcellularLocation>
        <location evidence="1">Cytoplasm</location>
    </subcellularLocation>
</comment>
<comment type="miscellaneous">
    <text evidence="1">In the reaction, the free carboxyl group of octanoic acid is attached via an amide linkage to the epsilon-amino group of a specific lysine residue of lipoyl domains of lipoate-dependent enzymes.</text>
</comment>
<comment type="similarity">
    <text evidence="1">Belongs to the LipB family.</text>
</comment>
<proteinExistence type="inferred from homology"/>
<protein>
    <recommendedName>
        <fullName evidence="1">Octanoyltransferase</fullName>
        <ecNumber evidence="1">2.3.1.181</ecNumber>
    </recommendedName>
    <alternativeName>
        <fullName evidence="1">Lipoate-protein ligase B</fullName>
    </alternativeName>
    <alternativeName>
        <fullName evidence="1">Lipoyl/octanoyl transferase</fullName>
    </alternativeName>
    <alternativeName>
        <fullName evidence="1">Octanoyl-[acyl-carrier-protein]-protein N-octanoyltransferase</fullName>
    </alternativeName>
</protein>
<feature type="chain" id="PRO_1000001122" description="Octanoyltransferase">
    <location>
        <begin position="1"/>
        <end position="218"/>
    </location>
</feature>
<feature type="domain" description="BPL/LPL catalytic" evidence="2">
    <location>
        <begin position="32"/>
        <end position="218"/>
    </location>
</feature>
<feature type="active site" description="Acyl-thioester intermediate" evidence="1">
    <location>
        <position position="182"/>
    </location>
</feature>
<feature type="binding site" evidence="1">
    <location>
        <begin position="71"/>
        <end position="78"/>
    </location>
    <ligand>
        <name>substrate</name>
    </ligand>
</feature>
<feature type="binding site" evidence="1">
    <location>
        <begin position="151"/>
        <end position="153"/>
    </location>
    <ligand>
        <name>substrate</name>
    </ligand>
</feature>
<feature type="binding site" evidence="1">
    <location>
        <begin position="164"/>
        <end position="166"/>
    </location>
    <ligand>
        <name>substrate</name>
    </ligand>
</feature>
<feature type="site" description="Lowers pKa of active site Cys" evidence="1">
    <location>
        <position position="148"/>
    </location>
</feature>
<gene>
    <name evidence="1" type="primary">lipB</name>
    <name type="ordered locus">Rsph17025_0665</name>
</gene>
<name>LIPB_CERS5</name>
<reference key="1">
    <citation type="submission" date="2007-04" db="EMBL/GenBank/DDBJ databases">
        <title>Complete sequence of chromosome of Rhodobacter sphaeroides ATCC 17025.</title>
        <authorList>
            <consortium name="US DOE Joint Genome Institute"/>
            <person name="Copeland A."/>
            <person name="Lucas S."/>
            <person name="Lapidus A."/>
            <person name="Barry K."/>
            <person name="Detter J.C."/>
            <person name="Glavina del Rio T."/>
            <person name="Hammon N."/>
            <person name="Israni S."/>
            <person name="Dalin E."/>
            <person name="Tice H."/>
            <person name="Pitluck S."/>
            <person name="Chertkov O."/>
            <person name="Brettin T."/>
            <person name="Bruce D."/>
            <person name="Han C."/>
            <person name="Schmutz J."/>
            <person name="Larimer F."/>
            <person name="Land M."/>
            <person name="Hauser L."/>
            <person name="Kyrpides N."/>
            <person name="Kim E."/>
            <person name="Richardson P."/>
            <person name="Mackenzie C."/>
            <person name="Choudhary M."/>
            <person name="Donohue T.J."/>
            <person name="Kaplan S."/>
        </authorList>
    </citation>
    <scope>NUCLEOTIDE SEQUENCE [LARGE SCALE GENOMIC DNA]</scope>
    <source>
        <strain>ATCC 17025 / ATH 2.4.3</strain>
    </source>
</reference>
<organism>
    <name type="scientific">Cereibacter sphaeroides (strain ATCC 17025 / ATH 2.4.3)</name>
    <name type="common">Rhodobacter sphaeroides</name>
    <dbReference type="NCBI Taxonomy" id="349102"/>
    <lineage>
        <taxon>Bacteria</taxon>
        <taxon>Pseudomonadati</taxon>
        <taxon>Pseudomonadota</taxon>
        <taxon>Alphaproteobacteria</taxon>
        <taxon>Rhodobacterales</taxon>
        <taxon>Paracoccaceae</taxon>
        <taxon>Cereibacter</taxon>
    </lineage>
</organism>
<evidence type="ECO:0000255" key="1">
    <source>
        <dbReference type="HAMAP-Rule" id="MF_00013"/>
    </source>
</evidence>
<evidence type="ECO:0000255" key="2">
    <source>
        <dbReference type="PROSITE-ProRule" id="PRU01067"/>
    </source>
</evidence>
<accession>A4WQA7</accession>